<gene>
    <name evidence="1" type="primary">cysS</name>
    <name type="ordered locus">swp_3264</name>
</gene>
<proteinExistence type="inferred from homology"/>
<protein>
    <recommendedName>
        <fullName evidence="1">Cysteine--tRNA ligase</fullName>
        <ecNumber evidence="1">6.1.1.16</ecNumber>
    </recommendedName>
    <alternativeName>
        <fullName evidence="1">Cysteinyl-tRNA synthetase</fullName>
        <shortName evidence="1">CysRS</shortName>
    </alternativeName>
</protein>
<accession>B8CRG0</accession>
<comment type="catalytic activity">
    <reaction evidence="1">
        <text>tRNA(Cys) + L-cysteine + ATP = L-cysteinyl-tRNA(Cys) + AMP + diphosphate</text>
        <dbReference type="Rhea" id="RHEA:17773"/>
        <dbReference type="Rhea" id="RHEA-COMP:9661"/>
        <dbReference type="Rhea" id="RHEA-COMP:9679"/>
        <dbReference type="ChEBI" id="CHEBI:30616"/>
        <dbReference type="ChEBI" id="CHEBI:33019"/>
        <dbReference type="ChEBI" id="CHEBI:35235"/>
        <dbReference type="ChEBI" id="CHEBI:78442"/>
        <dbReference type="ChEBI" id="CHEBI:78517"/>
        <dbReference type="ChEBI" id="CHEBI:456215"/>
        <dbReference type="EC" id="6.1.1.16"/>
    </reaction>
</comment>
<comment type="cofactor">
    <cofactor evidence="1">
        <name>Zn(2+)</name>
        <dbReference type="ChEBI" id="CHEBI:29105"/>
    </cofactor>
    <text evidence="1">Binds 1 zinc ion per subunit.</text>
</comment>
<comment type="subunit">
    <text evidence="1">Monomer.</text>
</comment>
<comment type="subcellular location">
    <subcellularLocation>
        <location evidence="1">Cytoplasm</location>
    </subcellularLocation>
</comment>
<comment type="similarity">
    <text evidence="1">Belongs to the class-I aminoacyl-tRNA synthetase family.</text>
</comment>
<keyword id="KW-0030">Aminoacyl-tRNA synthetase</keyword>
<keyword id="KW-0067">ATP-binding</keyword>
<keyword id="KW-0963">Cytoplasm</keyword>
<keyword id="KW-0436">Ligase</keyword>
<keyword id="KW-0479">Metal-binding</keyword>
<keyword id="KW-0547">Nucleotide-binding</keyword>
<keyword id="KW-0648">Protein biosynthesis</keyword>
<keyword id="KW-0862">Zinc</keyword>
<name>SYC_SHEPW</name>
<evidence type="ECO:0000255" key="1">
    <source>
        <dbReference type="HAMAP-Rule" id="MF_00041"/>
    </source>
</evidence>
<sequence>MLKLYNTLTRQKEQFVPIQPGKIGMYVCGVTIYDLCHIGHGRTFVSFDMIVRYLRYSGYEVNFQRNITDVDDKIIKRANENNESCDSLTERLIGEMHRDFDSLNMARPDFEPRATLHMPEIIEMVEKLIAREHAYVAANGDVLFSVSSFPEYGRLSGQNLEQLQAGARVEVEDAKRDPMDFVLWKMSKPGEPTWDSPWGPGRPGWHIECSAMNSKHLGNHFDIHGGGSDLQFPHHENEIAQSCCAHDTKYVNYWMHTGMVMVDKEKMSKSLNNFFTIRDVLNHYDAATVRYFLLSGHYRSQLNYSEENLKQAKSGLERIYTALKDLDLTVDAAPAEAFIAQFKRAMDDDFNTPEAYSVLFEMVREINRLKLTDMQQASALGVALKQLADVLGILGQDVDTFFKGEGSDDEVAEIEALIVERNRARTEKDWPAADVARDGLNALGVILEDGPEGTTWRKK</sequence>
<feature type="chain" id="PRO_1000199086" description="Cysteine--tRNA ligase">
    <location>
        <begin position="1"/>
        <end position="459"/>
    </location>
</feature>
<feature type="short sequence motif" description="'HIGH' region">
    <location>
        <begin position="30"/>
        <end position="40"/>
    </location>
</feature>
<feature type="short sequence motif" description="'KMSKS' region">
    <location>
        <begin position="266"/>
        <end position="270"/>
    </location>
</feature>
<feature type="binding site" evidence="1">
    <location>
        <position position="28"/>
    </location>
    <ligand>
        <name>Zn(2+)</name>
        <dbReference type="ChEBI" id="CHEBI:29105"/>
    </ligand>
</feature>
<feature type="binding site" evidence="1">
    <location>
        <position position="209"/>
    </location>
    <ligand>
        <name>Zn(2+)</name>
        <dbReference type="ChEBI" id="CHEBI:29105"/>
    </ligand>
</feature>
<feature type="binding site" evidence="1">
    <location>
        <position position="234"/>
    </location>
    <ligand>
        <name>Zn(2+)</name>
        <dbReference type="ChEBI" id="CHEBI:29105"/>
    </ligand>
</feature>
<feature type="binding site" evidence="1">
    <location>
        <position position="238"/>
    </location>
    <ligand>
        <name>Zn(2+)</name>
        <dbReference type="ChEBI" id="CHEBI:29105"/>
    </ligand>
</feature>
<feature type="binding site" evidence="1">
    <location>
        <position position="269"/>
    </location>
    <ligand>
        <name>ATP</name>
        <dbReference type="ChEBI" id="CHEBI:30616"/>
    </ligand>
</feature>
<reference key="1">
    <citation type="journal article" date="2008" name="PLoS ONE">
        <title>Environmental adaptation: genomic analysis of the piezotolerant and psychrotolerant deep-sea iron reducing bacterium Shewanella piezotolerans WP3.</title>
        <authorList>
            <person name="Wang F."/>
            <person name="Wang J."/>
            <person name="Jian H."/>
            <person name="Zhang B."/>
            <person name="Li S."/>
            <person name="Wang F."/>
            <person name="Zeng X."/>
            <person name="Gao L."/>
            <person name="Bartlett D.H."/>
            <person name="Yu J."/>
            <person name="Hu S."/>
            <person name="Xiao X."/>
        </authorList>
    </citation>
    <scope>NUCLEOTIDE SEQUENCE [LARGE SCALE GENOMIC DNA]</scope>
    <source>
        <strain>WP3 / JCM 13877</strain>
    </source>
</reference>
<dbReference type="EC" id="6.1.1.16" evidence="1"/>
<dbReference type="EMBL" id="CP000472">
    <property type="protein sequence ID" value="ACJ29968.1"/>
    <property type="molecule type" value="Genomic_DNA"/>
</dbReference>
<dbReference type="RefSeq" id="WP_020913318.1">
    <property type="nucleotide sequence ID" value="NC_011566.1"/>
</dbReference>
<dbReference type="SMR" id="B8CRG0"/>
<dbReference type="STRING" id="225849.swp_3264"/>
<dbReference type="KEGG" id="swp:swp_3264"/>
<dbReference type="eggNOG" id="COG0215">
    <property type="taxonomic scope" value="Bacteria"/>
</dbReference>
<dbReference type="HOGENOM" id="CLU_013528_0_2_6"/>
<dbReference type="OrthoDB" id="9815130at2"/>
<dbReference type="Proteomes" id="UP000000753">
    <property type="component" value="Chromosome"/>
</dbReference>
<dbReference type="GO" id="GO:0005829">
    <property type="term" value="C:cytosol"/>
    <property type="evidence" value="ECO:0007669"/>
    <property type="project" value="TreeGrafter"/>
</dbReference>
<dbReference type="GO" id="GO:0005524">
    <property type="term" value="F:ATP binding"/>
    <property type="evidence" value="ECO:0007669"/>
    <property type="project" value="UniProtKB-UniRule"/>
</dbReference>
<dbReference type="GO" id="GO:0004817">
    <property type="term" value="F:cysteine-tRNA ligase activity"/>
    <property type="evidence" value="ECO:0007669"/>
    <property type="project" value="UniProtKB-UniRule"/>
</dbReference>
<dbReference type="GO" id="GO:0008270">
    <property type="term" value="F:zinc ion binding"/>
    <property type="evidence" value="ECO:0007669"/>
    <property type="project" value="UniProtKB-UniRule"/>
</dbReference>
<dbReference type="GO" id="GO:0006423">
    <property type="term" value="P:cysteinyl-tRNA aminoacylation"/>
    <property type="evidence" value="ECO:0007669"/>
    <property type="project" value="UniProtKB-UniRule"/>
</dbReference>
<dbReference type="CDD" id="cd07963">
    <property type="entry name" value="Anticodon_Ia_Cys"/>
    <property type="match status" value="1"/>
</dbReference>
<dbReference type="CDD" id="cd00672">
    <property type="entry name" value="CysRS_core"/>
    <property type="match status" value="1"/>
</dbReference>
<dbReference type="FunFam" id="1.20.120.1910:FF:000001">
    <property type="entry name" value="Cysteine--tRNA ligase"/>
    <property type="match status" value="1"/>
</dbReference>
<dbReference type="FunFam" id="3.40.50.620:FF:000009">
    <property type="entry name" value="Cysteine--tRNA ligase"/>
    <property type="match status" value="1"/>
</dbReference>
<dbReference type="Gene3D" id="1.20.120.1910">
    <property type="entry name" value="Cysteine-tRNA ligase, C-terminal anti-codon recognition domain"/>
    <property type="match status" value="1"/>
</dbReference>
<dbReference type="Gene3D" id="3.40.50.620">
    <property type="entry name" value="HUPs"/>
    <property type="match status" value="1"/>
</dbReference>
<dbReference type="HAMAP" id="MF_00041">
    <property type="entry name" value="Cys_tRNA_synth"/>
    <property type="match status" value="1"/>
</dbReference>
<dbReference type="InterPro" id="IPR015803">
    <property type="entry name" value="Cys-tRNA-ligase"/>
</dbReference>
<dbReference type="InterPro" id="IPR015273">
    <property type="entry name" value="Cys-tRNA-synt_Ia_DALR"/>
</dbReference>
<dbReference type="InterPro" id="IPR024909">
    <property type="entry name" value="Cys-tRNA/MSH_ligase"/>
</dbReference>
<dbReference type="InterPro" id="IPR056411">
    <property type="entry name" value="CysS_C"/>
</dbReference>
<dbReference type="InterPro" id="IPR014729">
    <property type="entry name" value="Rossmann-like_a/b/a_fold"/>
</dbReference>
<dbReference type="InterPro" id="IPR032678">
    <property type="entry name" value="tRNA-synt_1_cat_dom"/>
</dbReference>
<dbReference type="InterPro" id="IPR009080">
    <property type="entry name" value="tRNAsynth_Ia_anticodon-bd"/>
</dbReference>
<dbReference type="NCBIfam" id="TIGR00435">
    <property type="entry name" value="cysS"/>
    <property type="match status" value="1"/>
</dbReference>
<dbReference type="PANTHER" id="PTHR10890:SF3">
    <property type="entry name" value="CYSTEINE--TRNA LIGASE, CYTOPLASMIC"/>
    <property type="match status" value="1"/>
</dbReference>
<dbReference type="PANTHER" id="PTHR10890">
    <property type="entry name" value="CYSTEINYL-TRNA SYNTHETASE"/>
    <property type="match status" value="1"/>
</dbReference>
<dbReference type="Pfam" id="PF23493">
    <property type="entry name" value="CysS_C"/>
    <property type="match status" value="1"/>
</dbReference>
<dbReference type="Pfam" id="PF09190">
    <property type="entry name" value="DALR_2"/>
    <property type="match status" value="1"/>
</dbReference>
<dbReference type="Pfam" id="PF01406">
    <property type="entry name" value="tRNA-synt_1e"/>
    <property type="match status" value="1"/>
</dbReference>
<dbReference type="PRINTS" id="PR00983">
    <property type="entry name" value="TRNASYNTHCYS"/>
</dbReference>
<dbReference type="SMART" id="SM00840">
    <property type="entry name" value="DALR_2"/>
    <property type="match status" value="1"/>
</dbReference>
<dbReference type="SUPFAM" id="SSF47323">
    <property type="entry name" value="Anticodon-binding domain of a subclass of class I aminoacyl-tRNA synthetases"/>
    <property type="match status" value="1"/>
</dbReference>
<dbReference type="SUPFAM" id="SSF52374">
    <property type="entry name" value="Nucleotidylyl transferase"/>
    <property type="match status" value="1"/>
</dbReference>
<organism>
    <name type="scientific">Shewanella piezotolerans (strain WP3 / JCM 13877)</name>
    <dbReference type="NCBI Taxonomy" id="225849"/>
    <lineage>
        <taxon>Bacteria</taxon>
        <taxon>Pseudomonadati</taxon>
        <taxon>Pseudomonadota</taxon>
        <taxon>Gammaproteobacteria</taxon>
        <taxon>Alteromonadales</taxon>
        <taxon>Shewanellaceae</taxon>
        <taxon>Shewanella</taxon>
    </lineage>
</organism>